<dbReference type="EC" id="6.3.5.2" evidence="1"/>
<dbReference type="EMBL" id="CP000143">
    <property type="protein sequence ID" value="ABA79174.1"/>
    <property type="molecule type" value="Genomic_DNA"/>
</dbReference>
<dbReference type="RefSeq" id="WP_009565333.1">
    <property type="nucleotide sequence ID" value="NZ_CP030271.1"/>
</dbReference>
<dbReference type="RefSeq" id="YP_353075.1">
    <property type="nucleotide sequence ID" value="NC_007493.2"/>
</dbReference>
<dbReference type="SMR" id="Q3J210"/>
<dbReference type="STRING" id="272943.RSP_0005"/>
<dbReference type="EnsemblBacteria" id="ABA79174">
    <property type="protein sequence ID" value="ABA79174"/>
    <property type="gene ID" value="RSP_0005"/>
</dbReference>
<dbReference type="GeneID" id="67446732"/>
<dbReference type="KEGG" id="rsp:RSP_0005"/>
<dbReference type="PATRIC" id="fig|272943.9.peg.1936"/>
<dbReference type="eggNOG" id="COG0518">
    <property type="taxonomic scope" value="Bacteria"/>
</dbReference>
<dbReference type="eggNOG" id="COG0519">
    <property type="taxonomic scope" value="Bacteria"/>
</dbReference>
<dbReference type="OrthoDB" id="9802219at2"/>
<dbReference type="PhylomeDB" id="Q3J210"/>
<dbReference type="UniPathway" id="UPA00189">
    <property type="reaction ID" value="UER00296"/>
</dbReference>
<dbReference type="Proteomes" id="UP000002703">
    <property type="component" value="Chromosome 1"/>
</dbReference>
<dbReference type="GO" id="GO:0005829">
    <property type="term" value="C:cytosol"/>
    <property type="evidence" value="ECO:0007669"/>
    <property type="project" value="TreeGrafter"/>
</dbReference>
<dbReference type="GO" id="GO:0005524">
    <property type="term" value="F:ATP binding"/>
    <property type="evidence" value="ECO:0007669"/>
    <property type="project" value="UniProtKB-UniRule"/>
</dbReference>
<dbReference type="GO" id="GO:0003921">
    <property type="term" value="F:GMP synthase activity"/>
    <property type="evidence" value="ECO:0007669"/>
    <property type="project" value="InterPro"/>
</dbReference>
<dbReference type="CDD" id="cd01742">
    <property type="entry name" value="GATase1_GMP_Synthase"/>
    <property type="match status" value="1"/>
</dbReference>
<dbReference type="CDD" id="cd01997">
    <property type="entry name" value="GMP_synthase_C"/>
    <property type="match status" value="1"/>
</dbReference>
<dbReference type="FunFam" id="3.30.300.10:FF:000002">
    <property type="entry name" value="GMP synthase [glutamine-hydrolyzing]"/>
    <property type="match status" value="1"/>
</dbReference>
<dbReference type="FunFam" id="3.40.50.620:FF:000001">
    <property type="entry name" value="GMP synthase [glutamine-hydrolyzing]"/>
    <property type="match status" value="1"/>
</dbReference>
<dbReference type="FunFam" id="3.40.50.880:FF:000001">
    <property type="entry name" value="GMP synthase [glutamine-hydrolyzing]"/>
    <property type="match status" value="1"/>
</dbReference>
<dbReference type="Gene3D" id="3.30.300.10">
    <property type="match status" value="1"/>
</dbReference>
<dbReference type="Gene3D" id="3.40.50.880">
    <property type="match status" value="1"/>
</dbReference>
<dbReference type="Gene3D" id="3.40.50.620">
    <property type="entry name" value="HUPs"/>
    <property type="match status" value="1"/>
</dbReference>
<dbReference type="HAMAP" id="MF_00344">
    <property type="entry name" value="GMP_synthase"/>
    <property type="match status" value="1"/>
</dbReference>
<dbReference type="InterPro" id="IPR029062">
    <property type="entry name" value="Class_I_gatase-like"/>
</dbReference>
<dbReference type="InterPro" id="IPR017926">
    <property type="entry name" value="GATASE"/>
</dbReference>
<dbReference type="InterPro" id="IPR001674">
    <property type="entry name" value="GMP_synth_C"/>
</dbReference>
<dbReference type="InterPro" id="IPR004739">
    <property type="entry name" value="GMP_synth_GATase"/>
</dbReference>
<dbReference type="InterPro" id="IPR022955">
    <property type="entry name" value="GMP_synthase"/>
</dbReference>
<dbReference type="InterPro" id="IPR025777">
    <property type="entry name" value="GMPS_ATP_PPase_dom"/>
</dbReference>
<dbReference type="InterPro" id="IPR022310">
    <property type="entry name" value="NAD/GMP_synthase"/>
</dbReference>
<dbReference type="InterPro" id="IPR014729">
    <property type="entry name" value="Rossmann-like_a/b/a_fold"/>
</dbReference>
<dbReference type="NCBIfam" id="TIGR00884">
    <property type="entry name" value="guaA_Cterm"/>
    <property type="match status" value="1"/>
</dbReference>
<dbReference type="NCBIfam" id="TIGR00888">
    <property type="entry name" value="guaA_Nterm"/>
    <property type="match status" value="1"/>
</dbReference>
<dbReference type="NCBIfam" id="NF000848">
    <property type="entry name" value="PRK00074.1"/>
    <property type="match status" value="1"/>
</dbReference>
<dbReference type="PANTHER" id="PTHR11922:SF2">
    <property type="entry name" value="GMP SYNTHASE [GLUTAMINE-HYDROLYZING]"/>
    <property type="match status" value="1"/>
</dbReference>
<dbReference type="PANTHER" id="PTHR11922">
    <property type="entry name" value="GMP SYNTHASE-RELATED"/>
    <property type="match status" value="1"/>
</dbReference>
<dbReference type="Pfam" id="PF00117">
    <property type="entry name" value="GATase"/>
    <property type="match status" value="1"/>
</dbReference>
<dbReference type="Pfam" id="PF00958">
    <property type="entry name" value="GMP_synt_C"/>
    <property type="match status" value="1"/>
</dbReference>
<dbReference type="Pfam" id="PF02540">
    <property type="entry name" value="NAD_synthase"/>
    <property type="match status" value="1"/>
</dbReference>
<dbReference type="PRINTS" id="PR00097">
    <property type="entry name" value="ANTSNTHASEII"/>
</dbReference>
<dbReference type="PRINTS" id="PR00096">
    <property type="entry name" value="GATASE"/>
</dbReference>
<dbReference type="SUPFAM" id="SSF52402">
    <property type="entry name" value="Adenine nucleotide alpha hydrolases-like"/>
    <property type="match status" value="1"/>
</dbReference>
<dbReference type="SUPFAM" id="SSF52317">
    <property type="entry name" value="Class I glutamine amidotransferase-like"/>
    <property type="match status" value="1"/>
</dbReference>
<dbReference type="SUPFAM" id="SSF54810">
    <property type="entry name" value="GMP synthetase C-terminal dimerisation domain"/>
    <property type="match status" value="1"/>
</dbReference>
<dbReference type="PROSITE" id="PS51273">
    <property type="entry name" value="GATASE_TYPE_1"/>
    <property type="match status" value="1"/>
</dbReference>
<dbReference type="PROSITE" id="PS51553">
    <property type="entry name" value="GMPS_ATP_PPASE"/>
    <property type="match status" value="1"/>
</dbReference>
<accession>Q3J210</accession>
<feature type="chain" id="PRO_0000229463" description="GMP synthase [glutamine-hydrolyzing]">
    <location>
        <begin position="1"/>
        <end position="518"/>
    </location>
</feature>
<feature type="domain" description="Glutamine amidotransferase type-1" evidence="1">
    <location>
        <begin position="6"/>
        <end position="200"/>
    </location>
</feature>
<feature type="domain" description="GMPS ATP-PPase" evidence="1">
    <location>
        <begin position="201"/>
        <end position="393"/>
    </location>
</feature>
<feature type="active site" description="Nucleophile" evidence="1">
    <location>
        <position position="84"/>
    </location>
</feature>
<feature type="active site" evidence="1">
    <location>
        <position position="175"/>
    </location>
</feature>
<feature type="active site" evidence="1">
    <location>
        <position position="177"/>
    </location>
</feature>
<feature type="binding site" evidence="1">
    <location>
        <begin position="228"/>
        <end position="234"/>
    </location>
    <ligand>
        <name>ATP</name>
        <dbReference type="ChEBI" id="CHEBI:30616"/>
    </ligand>
</feature>
<sequence>MTQHDRLLIIDFGSQVTQLIARRLRELNVYCEIHPYQNVTEAFLKGFAPKAVIFSGGPSSVFAEGAPMPPAGVFDLGVPILGICYGQQVMMHCLGGKVERGHGTAEFGRAFVTPTAERLAILDGWFEEGREQVWMSHGDHVSQIAPGFQVFGTSPNAPFAITGDPARHFYAVQFHPEVHHTPKGAKLYENFVRLAGFKGDWTMGAYREEAIARIRAQVGDQKVICGLSGGVDSSVAAVLIHEAIGDQLTCVFVDHGLLRLGEAEQVVKMFRDHYNMPLIHADESDLFLGALEGVSDPEVKRKTIGRLFIDVFQKHAADVGGATFLAQGTLYPDVIESVSFSGGPSVTIKSHHNVGGLPEKMGLKLVEPLRELFKDEVRALGRELGLPESFIGRHPFPGPGLAIRCPGEITREKLEILRRADAVYIDQIRRHGLYDEIWQAFVALLPVRTVGVMGDGRTYDYACALRAVTSVDGMTADYYPFTHDFLGETATRIINEVQGINRVTYDITSKPPGTIEWE</sequence>
<keyword id="KW-0067">ATP-binding</keyword>
<keyword id="KW-0315">Glutamine amidotransferase</keyword>
<keyword id="KW-0332">GMP biosynthesis</keyword>
<keyword id="KW-0436">Ligase</keyword>
<keyword id="KW-0547">Nucleotide-binding</keyword>
<keyword id="KW-0658">Purine biosynthesis</keyword>
<keyword id="KW-1185">Reference proteome</keyword>
<comment type="function">
    <text evidence="1">Catalyzes the synthesis of GMP from XMP.</text>
</comment>
<comment type="catalytic activity">
    <reaction evidence="1">
        <text>XMP + L-glutamine + ATP + H2O = GMP + L-glutamate + AMP + diphosphate + 2 H(+)</text>
        <dbReference type="Rhea" id="RHEA:11680"/>
        <dbReference type="ChEBI" id="CHEBI:15377"/>
        <dbReference type="ChEBI" id="CHEBI:15378"/>
        <dbReference type="ChEBI" id="CHEBI:29985"/>
        <dbReference type="ChEBI" id="CHEBI:30616"/>
        <dbReference type="ChEBI" id="CHEBI:33019"/>
        <dbReference type="ChEBI" id="CHEBI:57464"/>
        <dbReference type="ChEBI" id="CHEBI:58115"/>
        <dbReference type="ChEBI" id="CHEBI:58359"/>
        <dbReference type="ChEBI" id="CHEBI:456215"/>
        <dbReference type="EC" id="6.3.5.2"/>
    </reaction>
</comment>
<comment type="pathway">
    <text evidence="1">Purine metabolism; GMP biosynthesis; GMP from XMP (L-Gln route): step 1/1.</text>
</comment>
<comment type="subunit">
    <text evidence="1">Homodimer.</text>
</comment>
<name>GUAA_CERS4</name>
<reference key="1">
    <citation type="submission" date="2005-09" db="EMBL/GenBank/DDBJ databases">
        <title>Complete sequence of chromosome 1 of Rhodobacter sphaeroides 2.4.1.</title>
        <authorList>
            <person name="Copeland A."/>
            <person name="Lucas S."/>
            <person name="Lapidus A."/>
            <person name="Barry K."/>
            <person name="Detter J.C."/>
            <person name="Glavina T."/>
            <person name="Hammon N."/>
            <person name="Israni S."/>
            <person name="Pitluck S."/>
            <person name="Richardson P."/>
            <person name="Mackenzie C."/>
            <person name="Choudhary M."/>
            <person name="Larimer F."/>
            <person name="Hauser L.J."/>
            <person name="Land M."/>
            <person name="Donohue T.J."/>
            <person name="Kaplan S."/>
        </authorList>
    </citation>
    <scope>NUCLEOTIDE SEQUENCE [LARGE SCALE GENOMIC DNA]</scope>
    <source>
        <strain>ATCC 17023 / DSM 158 / JCM 6121 / CCUG 31486 / LMG 2827 / NBRC 12203 / NCIMB 8253 / ATH 2.4.1.</strain>
    </source>
</reference>
<evidence type="ECO:0000255" key="1">
    <source>
        <dbReference type="HAMAP-Rule" id="MF_00344"/>
    </source>
</evidence>
<organism>
    <name type="scientific">Cereibacter sphaeroides (strain ATCC 17023 / DSM 158 / JCM 6121 / CCUG 31486 / LMG 2827 / NBRC 12203 / NCIMB 8253 / ATH 2.4.1.)</name>
    <name type="common">Rhodobacter sphaeroides</name>
    <dbReference type="NCBI Taxonomy" id="272943"/>
    <lineage>
        <taxon>Bacteria</taxon>
        <taxon>Pseudomonadati</taxon>
        <taxon>Pseudomonadota</taxon>
        <taxon>Alphaproteobacteria</taxon>
        <taxon>Rhodobacterales</taxon>
        <taxon>Paracoccaceae</taxon>
        <taxon>Cereibacter</taxon>
    </lineage>
</organism>
<protein>
    <recommendedName>
        <fullName evidence="1">GMP synthase [glutamine-hydrolyzing]</fullName>
        <ecNumber evidence="1">6.3.5.2</ecNumber>
    </recommendedName>
    <alternativeName>
        <fullName evidence="1">GMP synthetase</fullName>
    </alternativeName>
    <alternativeName>
        <fullName evidence="1">Glutamine amidotransferase</fullName>
    </alternativeName>
</protein>
<proteinExistence type="inferred from homology"/>
<gene>
    <name evidence="1" type="primary">guaA</name>
    <name type="ordered locus">RHOS4_16060</name>
    <name type="ORF">RSP_0005</name>
</gene>